<name>PRPD_MYCTE</name>
<dbReference type="EC" id="4.2.1.79" evidence="2"/>
<dbReference type="EC" id="4.2.1.3" evidence="1"/>
<dbReference type="EMBL" id="AP012340">
    <property type="protein sequence ID" value="BAL65069.1"/>
    <property type="molecule type" value="Genomic_DNA"/>
</dbReference>
<dbReference type="SMR" id="H8F0D6"/>
<dbReference type="KEGG" id="mtn:ERDMAN_1266"/>
<dbReference type="PATRIC" id="fig|652616.3.peg.1284"/>
<dbReference type="HOGENOM" id="CLU_026574_3_0_11"/>
<dbReference type="UniPathway" id="UPA00223">
    <property type="reaction ID" value="UER00717"/>
</dbReference>
<dbReference type="UniPathway" id="UPA00946"/>
<dbReference type="GO" id="GO:0047547">
    <property type="term" value="F:2-methylcitrate dehydratase activity"/>
    <property type="evidence" value="ECO:0000314"/>
    <property type="project" value="UniProtKB"/>
</dbReference>
<dbReference type="GO" id="GO:0003994">
    <property type="term" value="F:aconitate hydratase activity"/>
    <property type="evidence" value="ECO:0007669"/>
    <property type="project" value="UniProtKB-EC"/>
</dbReference>
<dbReference type="GO" id="GO:0019679">
    <property type="term" value="P:propionate metabolic process, methylcitrate cycle"/>
    <property type="evidence" value="ECO:0000314"/>
    <property type="project" value="UniProtKB"/>
</dbReference>
<dbReference type="GO" id="GO:0006099">
    <property type="term" value="P:tricarboxylic acid cycle"/>
    <property type="evidence" value="ECO:0007669"/>
    <property type="project" value="UniProtKB-UniPathway"/>
</dbReference>
<dbReference type="FunFam" id="1.10.4100.10:FF:000003">
    <property type="entry name" value="2-methylcitrate dehydratase 1"/>
    <property type="match status" value="1"/>
</dbReference>
<dbReference type="FunFam" id="3.30.1330.120:FF:000004">
    <property type="entry name" value="2-methylcitrate dehydratase 2"/>
    <property type="match status" value="1"/>
</dbReference>
<dbReference type="Gene3D" id="1.10.4100.10">
    <property type="entry name" value="2-methylcitrate dehydratase PrpD"/>
    <property type="match status" value="1"/>
</dbReference>
<dbReference type="Gene3D" id="3.30.1330.120">
    <property type="entry name" value="2-methylcitrate dehydratase PrpD"/>
    <property type="match status" value="1"/>
</dbReference>
<dbReference type="InterPro" id="IPR053420">
    <property type="entry name" value="2-Methylcitrate_Dehydratase"/>
</dbReference>
<dbReference type="InterPro" id="IPR036148">
    <property type="entry name" value="MmgE/PrpD_sf"/>
</dbReference>
<dbReference type="InterPro" id="IPR042183">
    <property type="entry name" value="MmgE/PrpD_sf_1"/>
</dbReference>
<dbReference type="InterPro" id="IPR042188">
    <property type="entry name" value="MmgE/PrpD_sf_2"/>
</dbReference>
<dbReference type="InterPro" id="IPR005656">
    <property type="entry name" value="MmgE_PrpD"/>
</dbReference>
<dbReference type="InterPro" id="IPR045337">
    <property type="entry name" value="MmgE_PrpD_C"/>
</dbReference>
<dbReference type="InterPro" id="IPR045336">
    <property type="entry name" value="MmgE_PrpD_N"/>
</dbReference>
<dbReference type="NCBIfam" id="NF042438">
    <property type="entry name" value="PrpD_hiGCgrampos"/>
    <property type="match status" value="1"/>
</dbReference>
<dbReference type="PANTHER" id="PTHR16943:SF8">
    <property type="entry name" value="2-METHYLCITRATE DEHYDRATASE"/>
    <property type="match status" value="1"/>
</dbReference>
<dbReference type="PANTHER" id="PTHR16943">
    <property type="entry name" value="2-METHYLCITRATE DEHYDRATASE-RELATED"/>
    <property type="match status" value="1"/>
</dbReference>
<dbReference type="Pfam" id="PF19305">
    <property type="entry name" value="MmgE_PrpD_C"/>
    <property type="match status" value="1"/>
</dbReference>
<dbReference type="Pfam" id="PF03972">
    <property type="entry name" value="MmgE_PrpD_N"/>
    <property type="match status" value="1"/>
</dbReference>
<dbReference type="SUPFAM" id="SSF103378">
    <property type="entry name" value="2-methylcitrate dehydratase PrpD"/>
    <property type="match status" value="1"/>
</dbReference>
<gene>
    <name type="ordered locus">ERDMAN_1266</name>
</gene>
<proteinExistence type="evidence at protein level"/>
<organism>
    <name type="scientific">Mycobacterium tuberculosis (strain ATCC 35801 / TMC 107 / Erdman)</name>
    <dbReference type="NCBI Taxonomy" id="652616"/>
    <lineage>
        <taxon>Bacteria</taxon>
        <taxon>Bacillati</taxon>
        <taxon>Actinomycetota</taxon>
        <taxon>Actinomycetes</taxon>
        <taxon>Mycobacteriales</taxon>
        <taxon>Mycobacteriaceae</taxon>
        <taxon>Mycobacterium</taxon>
        <taxon>Mycobacterium tuberculosis complex</taxon>
    </lineage>
</organism>
<accession>H8F0D6</accession>
<evidence type="ECO:0000250" key="1">
    <source>
        <dbReference type="UniProtKB" id="P77243"/>
    </source>
</evidence>
<evidence type="ECO:0000269" key="2">
    <source>
    </source>
</evidence>
<evidence type="ECO:0000303" key="3">
    <source>
    </source>
</evidence>
<evidence type="ECO:0000305" key="4"/>
<evidence type="ECO:0000305" key="5">
    <source>
    </source>
</evidence>
<feature type="chain" id="PRO_0000432934" description="2-methylcitrate dehydratase">
    <location>
        <begin position="1"/>
        <end position="505"/>
    </location>
</feature>
<reference key="1">
    <citation type="journal article" date="2012" name="J. Bacteriol.">
        <title>Complete annotated genome sequence of Mycobacterium tuberculosis Erdman.</title>
        <authorList>
            <person name="Miyoshi-Akiyama T."/>
            <person name="Matsumura K."/>
            <person name="Iwai H."/>
            <person name="Funatogawa K."/>
            <person name="Kirikae T."/>
        </authorList>
    </citation>
    <scope>NUCLEOTIDE SEQUENCE [LARGE SCALE GENOMIC DNA]</scope>
    <source>
        <strain>ATCC 35801 / TMC 107 / Erdman</strain>
    </source>
</reference>
<reference key="2">
    <citation type="journal article" date="2006" name="Mol. Microbiol.">
        <title>Role of the methylcitrate cycle in Mycobacterium tuberculosis metabolism, intracellular growth, and virulence.</title>
        <authorList>
            <person name="Munoz-Elias E.J."/>
            <person name="Upton A.M."/>
            <person name="Cherian J."/>
            <person name="McKinney J.D."/>
        </authorList>
    </citation>
    <scope>FUNCTION</scope>
    <scope>CATALYTIC ACTIVITY</scope>
    <scope>PATHWAY</scope>
    <scope>DISRUPTION PHENOTYPE</scope>
    <scope>INDUCTION</scope>
    <source>
        <strain>ATCC 35801 / TMC 107 / Erdman</strain>
    </source>
</reference>
<protein>
    <recommendedName>
        <fullName evidence="3">2-methylcitrate dehydratase</fullName>
        <shortName evidence="3">2-MC dehydratase</shortName>
        <ecNumber evidence="2">4.2.1.79</ecNumber>
    </recommendedName>
    <alternativeName>
        <fullName evidence="1">Aconitate hydratase</fullName>
        <shortName evidence="1">ACN</shortName>
        <shortName evidence="1">Aconitase</shortName>
        <ecNumber evidence="1">4.2.1.3</ecNumber>
    </alternativeName>
</protein>
<sequence>MVRIMLMHAVRAWRSADDFPCTEHMAYKIAQVAADPVDVDPEVADMVCNRIIDNAAVSAASMVRRPVTVARHQALAHPVRHGAKVFGVEGSYSADWAAWANGVAARELDFHDTFLAADYSHPADNIPPLVAVAQQLGVCGAELIRGLVTAYEIHIDLTRGICLHEHKIDHVAHLGPAVAAGIGTMLRLDQETIYHAIGQALHLTTSTRQSRKGAISSWKAFAPAHAGKVGIEAVDRAMRGEGSPAPIWEGEDGVIAWLLAGPEHTYRVPLPAPGEPKRAILDSYTKQHSAEYQSQAPIDLACRLRERIGDLDQIASIVLHTSHHTHVVIGTGSGDPQKFDPDASRETLDHSLPYIFAVALQDGCWHHERSYAPERARRSDTVALWHKISTVEDPEWTRRYHCADPAKKAFGARAEVTLHSGEVIVDELAVADAHPLGTRPFERKQYVEKFTELADGVVEPVEQQRFLAVVESLADLESGAVGGLNVLVDPRVLDKAPVIPPGIFR</sequence>
<keyword id="KW-0456">Lyase</keyword>
<keyword id="KW-0816">Tricarboxylic acid cycle</keyword>
<comment type="function">
    <text evidence="1 2">Involved in the catabolism of short chain fatty acids (SCFA) via the tricarboxylic acid (TCA)(acetyl degradation route) and via the 2-methylcitrate cycle I (propionate degradation route). Catalyzes the dehydration of 2-methylcitrate (2-MC) to yield the cis isomer of 2-methyl-aconitate (PubMed:16689789). Could also catalyze the dehydration of citrate and the hydration of cis-aconitate (By similarity).</text>
</comment>
<comment type="catalytic activity">
    <reaction evidence="2">
        <text>(2S,3S)-2-methylcitrate = 2-methyl-cis-aconitate + H2O</text>
        <dbReference type="Rhea" id="RHEA:17725"/>
        <dbReference type="ChEBI" id="CHEBI:15377"/>
        <dbReference type="ChEBI" id="CHEBI:57872"/>
        <dbReference type="ChEBI" id="CHEBI:58853"/>
        <dbReference type="EC" id="4.2.1.79"/>
    </reaction>
</comment>
<comment type="catalytic activity">
    <reaction evidence="1">
        <text>citrate = D-threo-isocitrate</text>
        <dbReference type="Rhea" id="RHEA:10336"/>
        <dbReference type="ChEBI" id="CHEBI:15562"/>
        <dbReference type="ChEBI" id="CHEBI:16947"/>
        <dbReference type="EC" id="4.2.1.3"/>
    </reaction>
</comment>
<comment type="pathway">
    <text evidence="5">Organic acid metabolism; propanoate degradation.</text>
</comment>
<comment type="pathway">
    <text evidence="4">Carbohydrate metabolism; tricarboxylic acid cycle; isocitrate from oxaloacetate: step 1/2.</text>
</comment>
<comment type="subunit">
    <text evidence="1">Monomer.</text>
</comment>
<comment type="induction">
    <text evidence="2">By propionate, but not by glucose.</text>
</comment>
<comment type="disruption phenotype">
    <text evidence="2">Cells lacking both prpC and prpD are unable to grow on propionate media in vitro or in murine bone marrow-derived macrophages infected ex vivo. Paradoxically, bacterial growth and persistence, and tissue pathology, are indistinguishable in mice infected with wild-type.</text>
</comment>
<comment type="similarity">
    <text evidence="4">Belongs to the PrpD family.</text>
</comment>